<evidence type="ECO:0000255" key="1">
    <source>
        <dbReference type="PROSITE-ProRule" id="PRU00303"/>
    </source>
</evidence>
<evidence type="ECO:0000305" key="2"/>
<evidence type="ECO:0000305" key="3">
    <source>
    </source>
</evidence>
<evidence type="ECO:0000312" key="4">
    <source>
        <dbReference type="EMBL" id="AAB95225.1"/>
    </source>
</evidence>
<evidence type="ECO:0000312" key="5">
    <source>
        <dbReference type="EMBL" id="CAA59725.1"/>
    </source>
</evidence>
<accession>P0A3N7</accession>
<accession>Q09088</accession>
<proteinExistence type="inferred from homology"/>
<keyword id="KW-0998">Cell outer membrane</keyword>
<keyword id="KW-0449">Lipoprotein</keyword>
<keyword id="KW-0472">Membrane</keyword>
<keyword id="KW-0564">Palmitate</keyword>
<keyword id="KW-0732">Signal</keyword>
<dbReference type="EMBL" id="X85438">
    <property type="protein sequence ID" value="CAA59725.1"/>
    <property type="molecule type" value="Genomic_DNA"/>
</dbReference>
<dbReference type="EMBL" id="U78301">
    <property type="protein sequence ID" value="AAB95225.1"/>
    <property type="molecule type" value="Genomic_DNA"/>
</dbReference>
<dbReference type="PIR" id="S71531">
    <property type="entry name" value="S71531"/>
</dbReference>
<dbReference type="RefSeq" id="WP_011703777.1">
    <property type="nucleotide sequence ID" value="NZ_JACHGM010000003.1"/>
</dbReference>
<dbReference type="SMR" id="P0A3N7"/>
<dbReference type="OMA" id="EYTEMKS"/>
<dbReference type="GO" id="GO:0009279">
    <property type="term" value="C:cell outer membrane"/>
    <property type="evidence" value="ECO:0007669"/>
    <property type="project" value="UniProtKB-SubCell"/>
</dbReference>
<dbReference type="GO" id="GO:0009986">
    <property type="term" value="C:cell surface"/>
    <property type="evidence" value="ECO:0007669"/>
    <property type="project" value="UniProtKB-SubCell"/>
</dbReference>
<dbReference type="FunFam" id="2.40.128.160:FF:000001">
    <property type="entry name" value="Outer surface protein A"/>
    <property type="match status" value="1"/>
</dbReference>
<dbReference type="Gene3D" id="3.90.930.1">
    <property type="match status" value="1"/>
</dbReference>
<dbReference type="Gene3D" id="2.40.128.160">
    <property type="entry name" value="C1 set domains (antibody constant domain-like)"/>
    <property type="match status" value="1"/>
</dbReference>
<dbReference type="InterPro" id="IPR001809">
    <property type="entry name" value="OM_lipoprot_Borrelia"/>
</dbReference>
<dbReference type="InterPro" id="IPR023322">
    <property type="entry name" value="OM_lipoprot_dom_sf"/>
</dbReference>
<dbReference type="Pfam" id="PF00820">
    <property type="entry name" value="Lipoprotein_1"/>
    <property type="match status" value="1"/>
</dbReference>
<dbReference type="PRINTS" id="PR00968">
    <property type="entry name" value="OUTRSURFACE"/>
</dbReference>
<dbReference type="SUPFAM" id="SSF51087">
    <property type="entry name" value="Outer surface protein"/>
    <property type="match status" value="1"/>
</dbReference>
<dbReference type="PROSITE" id="PS51257">
    <property type="entry name" value="PROKAR_LIPOPROTEIN"/>
    <property type="match status" value="1"/>
</dbReference>
<organism>
    <name type="scientific">Borreliella afzelii</name>
    <name type="common">Borrelia afzelii</name>
    <dbReference type="NCBI Taxonomy" id="29518"/>
    <lineage>
        <taxon>Bacteria</taxon>
        <taxon>Pseudomonadati</taxon>
        <taxon>Spirochaetota</taxon>
        <taxon>Spirochaetia</taxon>
        <taxon>Spirochaetales</taxon>
        <taxon>Borreliaceae</taxon>
        <taxon>Borreliella</taxon>
    </lineage>
</organism>
<name>OSPA_BORAF</name>
<protein>
    <recommendedName>
        <fullName evidence="2">Outer surface protein A</fullName>
    </recommendedName>
</protein>
<gene>
    <name evidence="2" type="primary">ospA</name>
</gene>
<sequence length="273" mass="29630">MKKYLLGIGLILALIACKQNVSSLDEKNSASVDLPGEMKVLVSKEKDKDGKYSLKATVDKIELKGTSDKDNGSGVLEGTKDDKSKAKLTIADDLSKTTFELFKEDGKTLVSRKVSSKDKTSTDEMFNEKGELSAKTMTRENGTKLEYTEMKSDGTGKAKEVLKNFTLEGKVANDKVTLEVKEGTVTLSKEIAKSGEVTVALNDTNTTQATKKTGAWDSKTSTLTISVNSKKTTQLVFTKQDTITVQKYDSAGTNLEGTAVEIKTLDELKNALK</sequence>
<reference evidence="5" key="1">
    <citation type="journal article" date="1995" name="Med. Microbiol. Immunol.">
        <title>Sequence analysis of ospA genes shows homogeneity within Borrelia burgdorferi sensu stricto and Borrelia afzelii strains but reveals major subgroups within the Borrelia garinii species.</title>
        <authorList>
            <person name="Will G."/>
            <person name="Jauris-Heipke S."/>
            <person name="Schwab E."/>
            <person name="Busch U."/>
            <person name="Roessler D."/>
            <person name="Soutschek E."/>
            <person name="Wilske B."/>
            <person name="Preac-Mursic V."/>
        </authorList>
    </citation>
    <scope>NUCLEOTIDE SEQUENCE [GENOMIC DNA]</scope>
    <source>
        <strain>PLj7</strain>
    </source>
</reference>
<reference evidence="4" key="2">
    <citation type="submission" date="1996-12" db="EMBL/GenBank/DDBJ databases">
        <authorList>
            <person name="Wang J.H."/>
            <person name="Masuzawa T."/>
            <person name="Yanagihara Y."/>
        </authorList>
    </citation>
    <scope>NUCLEOTIDE SEQUENCE [GENOMIC DNA]</scope>
    <source>
        <strain>XJ23</strain>
    </source>
</reference>
<comment type="subcellular location">
    <subcellularLocation>
        <location evidence="3">Cell outer membrane</location>
        <topology evidence="1">Lipid-anchor</topology>
    </subcellularLocation>
    <subcellularLocation>
        <location evidence="3">Cell surface</location>
    </subcellularLocation>
</comment>
<comment type="similarity">
    <text evidence="2">Belongs to the OspA lipoprotein family.</text>
</comment>
<feature type="signal peptide" evidence="1">
    <location>
        <begin position="1"/>
        <end position="16"/>
    </location>
</feature>
<feature type="chain" id="PRO_0000018073" description="Outer surface protein A" evidence="1">
    <location>
        <begin position="17"/>
        <end position="273"/>
    </location>
</feature>
<feature type="lipid moiety-binding region" description="N-palmitoyl cysteine" evidence="1">
    <location>
        <position position="17"/>
    </location>
</feature>
<feature type="lipid moiety-binding region" description="S-diacylglycerol cysteine" evidence="1">
    <location>
        <position position="17"/>
    </location>
</feature>